<organism>
    <name type="scientific">Oryza sativa subsp. japonica</name>
    <name type="common">Rice</name>
    <dbReference type="NCBI Taxonomy" id="39947"/>
    <lineage>
        <taxon>Eukaryota</taxon>
        <taxon>Viridiplantae</taxon>
        <taxon>Streptophyta</taxon>
        <taxon>Embryophyta</taxon>
        <taxon>Tracheophyta</taxon>
        <taxon>Spermatophyta</taxon>
        <taxon>Magnoliopsida</taxon>
        <taxon>Liliopsida</taxon>
        <taxon>Poales</taxon>
        <taxon>Poaceae</taxon>
        <taxon>BOP clade</taxon>
        <taxon>Oryzoideae</taxon>
        <taxon>Oryzeae</taxon>
        <taxon>Oryzinae</taxon>
        <taxon>Oryza</taxon>
        <taxon>Oryza sativa</taxon>
    </lineage>
</organism>
<dbReference type="EMBL" id="AL606598">
    <property type="protein sequence ID" value="CAE03169.1"/>
    <property type="status" value="ALT_SEQ"/>
    <property type="molecule type" value="Genomic_DNA"/>
</dbReference>
<dbReference type="EMBL" id="AL606618">
    <property type="protein sequence ID" value="CAE02910.3"/>
    <property type="status" value="ALT_SEQ"/>
    <property type="molecule type" value="Genomic_DNA"/>
</dbReference>
<dbReference type="EMBL" id="AP008210">
    <property type="protein sequence ID" value="BAF14685.1"/>
    <property type="molecule type" value="Genomic_DNA"/>
</dbReference>
<dbReference type="EMBL" id="AP014960">
    <property type="protein sequence ID" value="BAS89168.1"/>
    <property type="molecule type" value="Genomic_DNA"/>
</dbReference>
<dbReference type="EMBL" id="CM000141">
    <property type="protein sequence ID" value="EAZ30714.1"/>
    <property type="status" value="ALT_SEQ"/>
    <property type="molecule type" value="Genomic_DNA"/>
</dbReference>
<dbReference type="EMBL" id="AK099124">
    <property type="protein sequence ID" value="BAG93939.1"/>
    <property type="molecule type" value="mRNA"/>
</dbReference>
<dbReference type="EMBL" id="AK106155">
    <property type="protein sequence ID" value="BAG97606.1"/>
    <property type="molecule type" value="mRNA"/>
</dbReference>
<dbReference type="EMBL" id="AK119714">
    <property type="protein sequence ID" value="BAG99762.1"/>
    <property type="molecule type" value="mRNA"/>
</dbReference>
<dbReference type="RefSeq" id="XP_015637221.1">
    <property type="nucleotide sequence ID" value="XM_015781735.1"/>
</dbReference>
<dbReference type="FunCoup" id="Q0JDA2">
    <property type="interactions" value="3179"/>
</dbReference>
<dbReference type="STRING" id="39947.Q0JDA2"/>
<dbReference type="PaxDb" id="39947-Q0JDA2"/>
<dbReference type="EnsemblPlants" id="Os04t0418000-01">
    <property type="protein sequence ID" value="Os04t0418000-01"/>
    <property type="gene ID" value="Os04g0418000"/>
</dbReference>
<dbReference type="Gramene" id="Os04t0418000-01">
    <property type="protein sequence ID" value="Os04t0418000-01"/>
    <property type="gene ID" value="Os04g0418000"/>
</dbReference>
<dbReference type="KEGG" id="dosa:Os04g0418000"/>
<dbReference type="eggNOG" id="ENOG502QQK1">
    <property type="taxonomic scope" value="Eukaryota"/>
</dbReference>
<dbReference type="HOGENOM" id="CLU_076459_0_0_1"/>
<dbReference type="InParanoid" id="Q0JDA2"/>
<dbReference type="OMA" id="EIECAFK"/>
<dbReference type="OrthoDB" id="1910373at2759"/>
<dbReference type="UniPathway" id="UPA00223"/>
<dbReference type="Proteomes" id="UP000000763">
    <property type="component" value="Chromosome 4"/>
</dbReference>
<dbReference type="Proteomes" id="UP000007752">
    <property type="component" value="Chromosome 4"/>
</dbReference>
<dbReference type="Proteomes" id="UP000059680">
    <property type="component" value="Chromosome 4"/>
</dbReference>
<dbReference type="GO" id="GO:0005743">
    <property type="term" value="C:mitochondrial inner membrane"/>
    <property type="evidence" value="ECO:0007669"/>
    <property type="project" value="UniProtKB-SubCell"/>
</dbReference>
<dbReference type="GO" id="GO:0045273">
    <property type="term" value="C:respiratory chain complex II (succinate dehydrogenase)"/>
    <property type="evidence" value="ECO:0000314"/>
    <property type="project" value="UniProtKB"/>
</dbReference>
<dbReference type="GO" id="GO:0006099">
    <property type="term" value="P:tricarboxylic acid cycle"/>
    <property type="evidence" value="ECO:0007669"/>
    <property type="project" value="UniProtKB-UniPathway"/>
</dbReference>
<dbReference type="InterPro" id="IPR025397">
    <property type="entry name" value="SDH5"/>
</dbReference>
<dbReference type="PANTHER" id="PTHR36139">
    <property type="entry name" value="SUCCINATE DEHYDROGENASE SUBUNIT 5, MITOCHONDRIAL"/>
    <property type="match status" value="1"/>
</dbReference>
<dbReference type="PANTHER" id="PTHR36139:SF1">
    <property type="entry name" value="SUCCINATE DEHYDROGENASE SUBUNIT 5, MITOCHONDRIAL"/>
    <property type="match status" value="1"/>
</dbReference>
<dbReference type="Pfam" id="PF14290">
    <property type="entry name" value="SDH5_plant"/>
    <property type="match status" value="1"/>
</dbReference>
<protein>
    <recommendedName>
        <fullName evidence="3">Succinate dehydrogenase subunit 5, mitochondrial</fullName>
    </recommendedName>
</protein>
<keyword id="KW-0472">Membrane</keyword>
<keyword id="KW-0496">Mitochondrion</keyword>
<keyword id="KW-0999">Mitochondrion inner membrane</keyword>
<keyword id="KW-1185">Reference proteome</keyword>
<keyword id="KW-0809">Transit peptide</keyword>
<keyword id="KW-0816">Tricarboxylic acid cycle</keyword>
<gene>
    <name evidence="3" type="primary">SDH5</name>
    <name evidence="4" type="ordered locus">Os04g0418000</name>
    <name type="ordered locus">LOC_Os04g34100</name>
    <name evidence="7" type="ORF">OsJ_14772</name>
    <name evidence="6" type="ORF">OSJNBa0033G16.15</name>
    <name evidence="5" type="ORF">OSJNBb0108J11.2</name>
</gene>
<reference key="1">
    <citation type="journal article" date="2002" name="Nature">
        <title>Sequence and analysis of rice chromosome 4.</title>
        <authorList>
            <person name="Feng Q."/>
            <person name="Zhang Y."/>
            <person name="Hao P."/>
            <person name="Wang S."/>
            <person name="Fu G."/>
            <person name="Huang Y."/>
            <person name="Li Y."/>
            <person name="Zhu J."/>
            <person name="Liu Y."/>
            <person name="Hu X."/>
            <person name="Jia P."/>
            <person name="Zhang Y."/>
            <person name="Zhao Q."/>
            <person name="Ying K."/>
            <person name="Yu S."/>
            <person name="Tang Y."/>
            <person name="Weng Q."/>
            <person name="Zhang L."/>
            <person name="Lu Y."/>
            <person name="Mu J."/>
            <person name="Lu Y."/>
            <person name="Zhang L.S."/>
            <person name="Yu Z."/>
            <person name="Fan D."/>
            <person name="Liu X."/>
            <person name="Lu T."/>
            <person name="Li C."/>
            <person name="Wu Y."/>
            <person name="Sun T."/>
            <person name="Lei H."/>
            <person name="Li T."/>
            <person name="Hu H."/>
            <person name="Guan J."/>
            <person name="Wu M."/>
            <person name="Zhang R."/>
            <person name="Zhou B."/>
            <person name="Chen Z."/>
            <person name="Chen L."/>
            <person name="Jin Z."/>
            <person name="Wang R."/>
            <person name="Yin H."/>
            <person name="Cai Z."/>
            <person name="Ren S."/>
            <person name="Lv G."/>
            <person name="Gu W."/>
            <person name="Zhu G."/>
            <person name="Tu Y."/>
            <person name="Jia J."/>
            <person name="Zhang Y."/>
            <person name="Chen J."/>
            <person name="Kang H."/>
            <person name="Chen X."/>
            <person name="Shao C."/>
            <person name="Sun Y."/>
            <person name="Hu Q."/>
            <person name="Zhang X."/>
            <person name="Zhang W."/>
            <person name="Wang L."/>
            <person name="Ding C."/>
            <person name="Sheng H."/>
            <person name="Gu J."/>
            <person name="Chen S."/>
            <person name="Ni L."/>
            <person name="Zhu F."/>
            <person name="Chen W."/>
            <person name="Lan L."/>
            <person name="Lai Y."/>
            <person name="Cheng Z."/>
            <person name="Gu M."/>
            <person name="Jiang J."/>
            <person name="Li J."/>
            <person name="Hong G."/>
            <person name="Xue Y."/>
            <person name="Han B."/>
        </authorList>
    </citation>
    <scope>NUCLEOTIDE SEQUENCE [LARGE SCALE GENOMIC DNA]</scope>
    <source>
        <strain>cv. Nipponbare</strain>
    </source>
</reference>
<reference key="2">
    <citation type="journal article" date="2005" name="Nature">
        <title>The map-based sequence of the rice genome.</title>
        <authorList>
            <consortium name="International rice genome sequencing project (IRGSP)"/>
        </authorList>
    </citation>
    <scope>NUCLEOTIDE SEQUENCE [LARGE SCALE GENOMIC DNA]</scope>
    <source>
        <strain>cv. Nipponbare</strain>
    </source>
</reference>
<reference key="3">
    <citation type="journal article" date="2008" name="Nucleic Acids Res.">
        <title>The rice annotation project database (RAP-DB): 2008 update.</title>
        <authorList>
            <consortium name="The rice annotation project (RAP)"/>
        </authorList>
    </citation>
    <scope>GENOME REANNOTATION</scope>
    <source>
        <strain>cv. Nipponbare</strain>
    </source>
</reference>
<reference key="4">
    <citation type="journal article" date="2013" name="Rice">
        <title>Improvement of the Oryza sativa Nipponbare reference genome using next generation sequence and optical map data.</title>
        <authorList>
            <person name="Kawahara Y."/>
            <person name="de la Bastide M."/>
            <person name="Hamilton J.P."/>
            <person name="Kanamori H."/>
            <person name="McCombie W.R."/>
            <person name="Ouyang S."/>
            <person name="Schwartz D.C."/>
            <person name="Tanaka T."/>
            <person name="Wu J."/>
            <person name="Zhou S."/>
            <person name="Childs K.L."/>
            <person name="Davidson R.M."/>
            <person name="Lin H."/>
            <person name="Quesada-Ocampo L."/>
            <person name="Vaillancourt B."/>
            <person name="Sakai H."/>
            <person name="Lee S.S."/>
            <person name="Kim J."/>
            <person name="Numa H."/>
            <person name="Itoh T."/>
            <person name="Buell C.R."/>
            <person name="Matsumoto T."/>
        </authorList>
    </citation>
    <scope>GENOME REANNOTATION</scope>
    <source>
        <strain>cv. Nipponbare</strain>
    </source>
</reference>
<reference key="5">
    <citation type="journal article" date="2005" name="PLoS Biol.">
        <title>The genomes of Oryza sativa: a history of duplications.</title>
        <authorList>
            <person name="Yu J."/>
            <person name="Wang J."/>
            <person name="Lin W."/>
            <person name="Li S."/>
            <person name="Li H."/>
            <person name="Zhou J."/>
            <person name="Ni P."/>
            <person name="Dong W."/>
            <person name="Hu S."/>
            <person name="Zeng C."/>
            <person name="Zhang J."/>
            <person name="Zhang Y."/>
            <person name="Li R."/>
            <person name="Xu Z."/>
            <person name="Li S."/>
            <person name="Li X."/>
            <person name="Zheng H."/>
            <person name="Cong L."/>
            <person name="Lin L."/>
            <person name="Yin J."/>
            <person name="Geng J."/>
            <person name="Li G."/>
            <person name="Shi J."/>
            <person name="Liu J."/>
            <person name="Lv H."/>
            <person name="Li J."/>
            <person name="Wang J."/>
            <person name="Deng Y."/>
            <person name="Ran L."/>
            <person name="Shi X."/>
            <person name="Wang X."/>
            <person name="Wu Q."/>
            <person name="Li C."/>
            <person name="Ren X."/>
            <person name="Wang J."/>
            <person name="Wang X."/>
            <person name="Li D."/>
            <person name="Liu D."/>
            <person name="Zhang X."/>
            <person name="Ji Z."/>
            <person name="Zhao W."/>
            <person name="Sun Y."/>
            <person name="Zhang Z."/>
            <person name="Bao J."/>
            <person name="Han Y."/>
            <person name="Dong L."/>
            <person name="Ji J."/>
            <person name="Chen P."/>
            <person name="Wu S."/>
            <person name="Liu J."/>
            <person name="Xiao Y."/>
            <person name="Bu D."/>
            <person name="Tan J."/>
            <person name="Yang L."/>
            <person name="Ye C."/>
            <person name="Zhang J."/>
            <person name="Xu J."/>
            <person name="Zhou Y."/>
            <person name="Yu Y."/>
            <person name="Zhang B."/>
            <person name="Zhuang S."/>
            <person name="Wei H."/>
            <person name="Liu B."/>
            <person name="Lei M."/>
            <person name="Yu H."/>
            <person name="Li Y."/>
            <person name="Xu H."/>
            <person name="Wei S."/>
            <person name="He X."/>
            <person name="Fang L."/>
            <person name="Zhang Z."/>
            <person name="Zhang Y."/>
            <person name="Huang X."/>
            <person name="Su Z."/>
            <person name="Tong W."/>
            <person name="Li J."/>
            <person name="Tong Z."/>
            <person name="Li S."/>
            <person name="Ye J."/>
            <person name="Wang L."/>
            <person name="Fang L."/>
            <person name="Lei T."/>
            <person name="Chen C.-S."/>
            <person name="Chen H.-C."/>
            <person name="Xu Z."/>
            <person name="Li H."/>
            <person name="Huang H."/>
            <person name="Zhang F."/>
            <person name="Xu H."/>
            <person name="Li N."/>
            <person name="Zhao C."/>
            <person name="Li S."/>
            <person name="Dong L."/>
            <person name="Huang Y."/>
            <person name="Li L."/>
            <person name="Xi Y."/>
            <person name="Qi Q."/>
            <person name="Li W."/>
            <person name="Zhang B."/>
            <person name="Hu W."/>
            <person name="Zhang Y."/>
            <person name="Tian X."/>
            <person name="Jiao Y."/>
            <person name="Liang X."/>
            <person name="Jin J."/>
            <person name="Gao L."/>
            <person name="Zheng W."/>
            <person name="Hao B."/>
            <person name="Liu S.-M."/>
            <person name="Wang W."/>
            <person name="Yuan L."/>
            <person name="Cao M."/>
            <person name="McDermott J."/>
            <person name="Samudrala R."/>
            <person name="Wang J."/>
            <person name="Wong G.K.-S."/>
            <person name="Yang H."/>
        </authorList>
    </citation>
    <scope>NUCLEOTIDE SEQUENCE [LARGE SCALE GENOMIC DNA]</scope>
    <source>
        <strain>cv. Nipponbare</strain>
    </source>
</reference>
<reference key="6">
    <citation type="journal article" date="2003" name="Science">
        <title>Collection, mapping, and annotation of over 28,000 cDNA clones from japonica rice.</title>
        <authorList>
            <consortium name="The rice full-length cDNA consortium"/>
        </authorList>
    </citation>
    <scope>NUCLEOTIDE SEQUENCE [LARGE SCALE MRNA]</scope>
    <source>
        <strain>cv. Nipponbare</strain>
    </source>
</reference>
<reference key="7">
    <citation type="journal article" date="2010" name="Plant Mol. Biol.">
        <title>Functional and composition differences between mitochondrial complex II in Arabidopsis and rice are correlated with the complex genetic history of the enzyme.</title>
        <authorList>
            <person name="Huang S."/>
            <person name="Taylor N.L."/>
            <person name="Narsai R."/>
            <person name="Eubel H."/>
            <person name="Whelan J."/>
            <person name="Millar A.H."/>
        </authorList>
    </citation>
    <scope>IDENTIFICATION BY MASS SPECTROMETRY</scope>
    <scope>SUBUNIT</scope>
</reference>
<name>SDH5_ORYSJ</name>
<accession>Q0JDA2</accession>
<accession>A0A0P0W9Z6</accession>
<accession>Q7X6C3</accession>
<proteinExistence type="evidence at protein level"/>
<feature type="transit peptide" description="Mitochondrion" evidence="1">
    <location>
        <begin position="1"/>
        <end position="63"/>
    </location>
</feature>
<feature type="chain" id="PRO_0000431751" description="Succinate dehydrogenase subunit 5, mitochondrial" evidence="1">
    <location>
        <begin position="64"/>
        <end position="231"/>
    </location>
</feature>
<evidence type="ECO:0000255" key="1"/>
<evidence type="ECO:0000269" key="2">
    <source>
    </source>
</evidence>
<evidence type="ECO:0000305" key="3"/>
<evidence type="ECO:0000312" key="4">
    <source>
        <dbReference type="EMBL" id="BAF14685.1"/>
    </source>
</evidence>
<evidence type="ECO:0000312" key="5">
    <source>
        <dbReference type="EMBL" id="CAE02910.3"/>
    </source>
</evidence>
<evidence type="ECO:0000312" key="6">
    <source>
        <dbReference type="EMBL" id="CAE03169.1"/>
    </source>
</evidence>
<evidence type="ECO:0000312" key="7">
    <source>
        <dbReference type="EMBL" id="EAZ30714.1"/>
    </source>
</evidence>
<sequence length="231" mass="24583">MAAALRSSCAAARRLLRISPAALSTLTAASSRPAAVAPLARPIAAAAVSGGNNAFSWNLRRLFSSNEKHLPAISDPEVESAFKDLMAASWTGLPDSLVIEAKKAASKATDDKAGKEALLNVFRAAEACEEFGGVLVTLRMALDDLCGITGENVGPLPGYIEDAVKSAYKRYMKYLESFGPEENYLRKKVENELGTKMIHLKMRCSGVGSEWGKITLIGTSGISGSYVELRA</sequence>
<comment type="pathway">
    <text evidence="3">Carbohydrate metabolism; tricarboxylic acid cycle.</text>
</comment>
<comment type="subunit">
    <text evidence="2">Component of complex II composed of eight subunits in plants: four classical SDH subunits SDH1, SDH2, SDH3 and SDH4 (a flavoprotein (FP), an iron-sulfur protein (IP), and a cytochrome b composed of a large and a small subunit.), as well as four subunits unknown in mitochondria from bacteria and heterotrophic eukaryotes.</text>
</comment>
<comment type="subcellular location">
    <subcellularLocation>
        <location evidence="3">Mitochondrion inner membrane</location>
        <topology evidence="3">Peripheral membrane protein</topology>
    </subcellularLocation>
</comment>
<comment type="sequence caution" evidence="3">
    <conflict type="erroneous gene model prediction">
        <sequence resource="EMBL-CDS" id="CAE02910"/>
    </conflict>
</comment>
<comment type="sequence caution" evidence="3">
    <conflict type="erroneous gene model prediction">
        <sequence resource="EMBL-CDS" id="CAE03169"/>
    </conflict>
</comment>
<comment type="sequence caution" evidence="3">
    <conflict type="erroneous gene model prediction">
        <sequence resource="EMBL-CDS" id="EAZ30714"/>
    </conflict>
</comment>